<keyword id="KW-0002">3D-structure</keyword>
<keyword id="KW-1185">Reference proteome</keyword>
<protein>
    <recommendedName>
        <fullName>UPF0210 protein SP_0239</fullName>
    </recommendedName>
</protein>
<dbReference type="EMBL" id="AE005672">
    <property type="protein sequence ID" value="AAK74419.1"/>
    <property type="molecule type" value="Genomic_DNA"/>
</dbReference>
<dbReference type="PIR" id="B95028">
    <property type="entry name" value="B95028"/>
</dbReference>
<dbReference type="RefSeq" id="WP_000354896.1">
    <property type="nucleotide sequence ID" value="NZ_CP155539.1"/>
</dbReference>
<dbReference type="PDB" id="2HA9">
    <property type="method" value="X-ray"/>
    <property type="resolution" value="2.70 A"/>
    <property type="chains" value="A/B=1-445"/>
</dbReference>
<dbReference type="PDBsum" id="2HA9"/>
<dbReference type="SMR" id="Q97ST4"/>
<dbReference type="IntAct" id="Q97ST4">
    <property type="interactions" value="1"/>
</dbReference>
<dbReference type="PaxDb" id="170187-SP_0239"/>
<dbReference type="EnsemblBacteria" id="AAK74419">
    <property type="protein sequence ID" value="AAK74419"/>
    <property type="gene ID" value="SP_0239"/>
</dbReference>
<dbReference type="KEGG" id="spn:SP_0239"/>
<dbReference type="eggNOG" id="COG2848">
    <property type="taxonomic scope" value="Bacteria"/>
</dbReference>
<dbReference type="PhylomeDB" id="Q97ST4"/>
<dbReference type="BioCyc" id="SPNE170187:G1FZB-243-MONOMER"/>
<dbReference type="EvolutionaryTrace" id="Q97ST4"/>
<dbReference type="Proteomes" id="UP000000585">
    <property type="component" value="Chromosome"/>
</dbReference>
<dbReference type="CDD" id="cd08025">
    <property type="entry name" value="RNR_PFL_like_DUF711"/>
    <property type="match status" value="1"/>
</dbReference>
<dbReference type="Gene3D" id="3.20.70.20">
    <property type="match status" value="1"/>
</dbReference>
<dbReference type="HAMAP" id="MF_01221">
    <property type="entry name" value="UPF0210"/>
    <property type="match status" value="1"/>
</dbReference>
<dbReference type="InterPro" id="IPR007841">
    <property type="entry name" value="UPF0210"/>
</dbReference>
<dbReference type="NCBIfam" id="NF003700">
    <property type="entry name" value="PRK05313.1"/>
    <property type="match status" value="1"/>
</dbReference>
<dbReference type="PANTHER" id="PTHR37560:SF1">
    <property type="entry name" value="UPF0210 PROTEIN MJ1665"/>
    <property type="match status" value="1"/>
</dbReference>
<dbReference type="PANTHER" id="PTHR37560">
    <property type="entry name" value="UPF0210 PROTEIN SPR0218"/>
    <property type="match status" value="1"/>
</dbReference>
<dbReference type="Pfam" id="PF05167">
    <property type="entry name" value="DUF711"/>
    <property type="match status" value="1"/>
</dbReference>
<dbReference type="SUPFAM" id="SSF51998">
    <property type="entry name" value="PFL-like glycyl radical enzymes"/>
    <property type="match status" value="1"/>
</dbReference>
<gene>
    <name type="ordered locus">SP_0239</name>
</gene>
<sequence>MDIRQVTETIAMIEEQNFDIRTITMGISLLDCIDPDINRAAEKIYQKITTKAANLVAVGDEIAAELGIPIVNKRVSVTPISLIGAATDATDYVVLAKALDKAAKEIGVDFIGGFSALVQKGYQKGDEILINSIPRALAETDKVCSSVNIGSTKSGINMTAVADMGRIIKETANLSDMGVAKLVVFANAVEDNPFMAGAFHGVGEADVIINVGVSGPGVVKRALEKVRGQSFDVVAETVKKTAFKITRIGQLVGQMASERLGVEFGIVDLSLAPTPAVGDSVARVLEEMGLETVGTHGTTAALALLNDQVKKGGVMACNQVGGLSGAFIPVSEDEGMIAAVQNGSLNLEKLEAMTAICSVGLDMIAIPEDTPAETIAAMIADEAAIGVINMKTTAVRIIPKGKEGDMIEFGGLLGTAPVMKVNGASSVDFISRGGQIPAPIHSFKN</sequence>
<reference key="1">
    <citation type="journal article" date="2001" name="Science">
        <title>Complete genome sequence of a virulent isolate of Streptococcus pneumoniae.</title>
        <authorList>
            <person name="Tettelin H."/>
            <person name="Nelson K.E."/>
            <person name="Paulsen I.T."/>
            <person name="Eisen J.A."/>
            <person name="Read T.D."/>
            <person name="Peterson S.N."/>
            <person name="Heidelberg J.F."/>
            <person name="DeBoy R.T."/>
            <person name="Haft D.H."/>
            <person name="Dodson R.J."/>
            <person name="Durkin A.S."/>
            <person name="Gwinn M.L."/>
            <person name="Kolonay J.F."/>
            <person name="Nelson W.C."/>
            <person name="Peterson J.D."/>
            <person name="Umayam L.A."/>
            <person name="White O."/>
            <person name="Salzberg S.L."/>
            <person name="Lewis M.R."/>
            <person name="Radune D."/>
            <person name="Holtzapple E.K."/>
            <person name="Khouri H.M."/>
            <person name="Wolf A.M."/>
            <person name="Utterback T.R."/>
            <person name="Hansen C.L."/>
            <person name="McDonald L.A."/>
            <person name="Feldblyum T.V."/>
            <person name="Angiuoli S.V."/>
            <person name="Dickinson T."/>
            <person name="Hickey E.K."/>
            <person name="Holt I.E."/>
            <person name="Loftus B.J."/>
            <person name="Yang F."/>
            <person name="Smith H.O."/>
            <person name="Venter J.C."/>
            <person name="Dougherty B.A."/>
            <person name="Morrison D.A."/>
            <person name="Hollingshead S.K."/>
            <person name="Fraser C.M."/>
        </authorList>
    </citation>
    <scope>NUCLEOTIDE SEQUENCE [LARGE SCALE GENOMIC DNA]</scope>
    <source>
        <strain>ATCC BAA-334 / TIGR4</strain>
    </source>
</reference>
<reference key="2">
    <citation type="submission" date="2006-08" db="PDB data bank">
        <title>Crystal structure of hypothetical upf0210 protein SP0239.</title>
        <authorList>
            <consortium name="Midwest center for structural genomics (MCSG)"/>
        </authorList>
    </citation>
    <scope>X-RAY CRYSTALLOGRAPHY (2.7 ANGSTROMS)</scope>
    <scope>SUBUNIT</scope>
    <source>
        <strain>ATCC BAA-334 / TIGR4</strain>
    </source>
</reference>
<comment type="subunit">
    <text evidence="1">Homodimer.</text>
</comment>
<comment type="similarity">
    <text evidence="2">Belongs to the UPF0210 family.</text>
</comment>
<accession>Q97ST4</accession>
<organism>
    <name type="scientific">Streptococcus pneumoniae serotype 4 (strain ATCC BAA-334 / TIGR4)</name>
    <dbReference type="NCBI Taxonomy" id="170187"/>
    <lineage>
        <taxon>Bacteria</taxon>
        <taxon>Bacillati</taxon>
        <taxon>Bacillota</taxon>
        <taxon>Bacilli</taxon>
        <taxon>Lactobacillales</taxon>
        <taxon>Streptococcaceae</taxon>
        <taxon>Streptococcus</taxon>
    </lineage>
</organism>
<proteinExistence type="evidence at protein level"/>
<evidence type="ECO:0000269" key="1">
    <source ref="2"/>
</evidence>
<evidence type="ECO:0000305" key="2"/>
<evidence type="ECO:0007829" key="3">
    <source>
        <dbReference type="PDB" id="2HA9"/>
    </source>
</evidence>
<feature type="chain" id="PRO_0000070561" description="UPF0210 protein SP_0239">
    <location>
        <begin position="1"/>
        <end position="445"/>
    </location>
</feature>
<feature type="helix" evidence="3">
    <location>
        <begin position="3"/>
        <end position="15"/>
    </location>
</feature>
<feature type="strand" evidence="3">
    <location>
        <begin position="20"/>
        <end position="27"/>
    </location>
</feature>
<feature type="helix" evidence="3">
    <location>
        <begin position="30"/>
        <end position="32"/>
    </location>
</feature>
<feature type="helix" evidence="3">
    <location>
        <begin position="37"/>
        <end position="51"/>
    </location>
</feature>
<feature type="turn" evidence="3">
    <location>
        <begin position="52"/>
        <end position="54"/>
    </location>
</feature>
<feature type="helix" evidence="3">
    <location>
        <begin position="55"/>
        <end position="66"/>
    </location>
</feature>
<feature type="strand" evidence="3">
    <location>
        <begin position="70"/>
        <end position="78"/>
    </location>
</feature>
<feature type="helix" evidence="3">
    <location>
        <begin position="80"/>
        <end position="85"/>
    </location>
</feature>
<feature type="helix" evidence="3">
    <location>
        <begin position="93"/>
        <end position="106"/>
    </location>
</feature>
<feature type="strand" evidence="3">
    <location>
        <begin position="109"/>
        <end position="117"/>
    </location>
</feature>
<feature type="helix" evidence="3">
    <location>
        <begin position="126"/>
        <end position="138"/>
    </location>
</feature>
<feature type="strand" evidence="3">
    <location>
        <begin position="141"/>
        <end position="148"/>
    </location>
</feature>
<feature type="turn" evidence="3">
    <location>
        <begin position="152"/>
        <end position="154"/>
    </location>
</feature>
<feature type="strand" evidence="3">
    <location>
        <begin position="155"/>
        <end position="157"/>
    </location>
</feature>
<feature type="helix" evidence="3">
    <location>
        <begin position="158"/>
        <end position="172"/>
    </location>
</feature>
<feature type="helix" evidence="3">
    <location>
        <begin position="178"/>
        <end position="181"/>
    </location>
</feature>
<feature type="strand" evidence="3">
    <location>
        <begin position="182"/>
        <end position="187"/>
    </location>
</feature>
<feature type="strand" evidence="3">
    <location>
        <begin position="206"/>
        <end position="213"/>
    </location>
</feature>
<feature type="helix" evidence="3">
    <location>
        <begin position="216"/>
        <end position="224"/>
    </location>
</feature>
<feature type="turn" evidence="3">
    <location>
        <begin position="225"/>
        <end position="228"/>
    </location>
</feature>
<feature type="helix" evidence="3">
    <location>
        <begin position="231"/>
        <end position="260"/>
    </location>
</feature>
<feature type="strand" evidence="3">
    <location>
        <begin position="262"/>
        <end position="267"/>
    </location>
</feature>
<feature type="helix" evidence="3">
    <location>
        <begin position="281"/>
        <end position="287"/>
    </location>
</feature>
<feature type="helix" evidence="3">
    <location>
        <begin position="298"/>
        <end position="314"/>
    </location>
</feature>
<feature type="helix" evidence="3">
    <location>
        <begin position="334"/>
        <end position="341"/>
    </location>
</feature>
<feature type="helix" evidence="3">
    <location>
        <begin position="347"/>
        <end position="353"/>
    </location>
</feature>
<feature type="strand" evidence="3">
    <location>
        <begin position="363"/>
        <end position="366"/>
    </location>
</feature>
<feature type="helix" evidence="3">
    <location>
        <begin position="372"/>
        <end position="389"/>
    </location>
</feature>
<feature type="strand" evidence="3">
    <location>
        <begin position="393"/>
        <end position="399"/>
    </location>
</feature>
<feature type="helix" evidence="3">
    <location>
        <begin position="427"/>
        <end position="431"/>
    </location>
</feature>
<feature type="strand" evidence="3">
    <location>
        <begin position="434"/>
        <end position="436"/>
    </location>
</feature>
<name>Y239_STRPN</name>